<proteinExistence type="evidence at transcript level"/>
<dbReference type="EC" id="2.7.11.1" evidence="2"/>
<dbReference type="EMBL" id="DS545251">
    <property type="protein sequence ID" value="EDQ51753.1"/>
    <property type="status" value="ALT_SEQ"/>
    <property type="molecule type" value="Genomic_DNA"/>
</dbReference>
<dbReference type="RefSeq" id="XP_001783413.1">
    <property type="nucleotide sequence ID" value="XM_001783361.1"/>
</dbReference>
<dbReference type="SMR" id="A9TXT1"/>
<dbReference type="FunCoup" id="A9TXT1">
    <property type="interactions" value="1821"/>
</dbReference>
<dbReference type="PaxDb" id="3218-PP1S364_10V6.1"/>
<dbReference type="eggNOG" id="ENOG502QPX8">
    <property type="taxonomic scope" value="Eukaryota"/>
</dbReference>
<dbReference type="HOGENOM" id="CLU_000288_99_3_1"/>
<dbReference type="InParanoid" id="A9TXT1"/>
<dbReference type="Proteomes" id="UP000006727">
    <property type="component" value="Unplaced"/>
</dbReference>
<dbReference type="GO" id="GO:0005886">
    <property type="term" value="C:plasma membrane"/>
    <property type="evidence" value="ECO:0007669"/>
    <property type="project" value="UniProtKB-SubCell"/>
</dbReference>
<dbReference type="GO" id="GO:0005524">
    <property type="term" value="F:ATP binding"/>
    <property type="evidence" value="ECO:0007669"/>
    <property type="project" value="UniProtKB-KW"/>
</dbReference>
<dbReference type="GO" id="GO:0008061">
    <property type="term" value="F:chitin binding"/>
    <property type="evidence" value="ECO:0007669"/>
    <property type="project" value="UniProtKB-KW"/>
</dbReference>
<dbReference type="GO" id="GO:0106310">
    <property type="term" value="F:protein serine kinase activity"/>
    <property type="evidence" value="ECO:0007669"/>
    <property type="project" value="RHEA"/>
</dbReference>
<dbReference type="GO" id="GO:0004674">
    <property type="term" value="F:protein serine/threonine kinase activity"/>
    <property type="evidence" value="ECO:0007669"/>
    <property type="project" value="UniProtKB-KW"/>
</dbReference>
<dbReference type="GO" id="GO:0019199">
    <property type="term" value="F:transmembrane receptor protein kinase activity"/>
    <property type="evidence" value="ECO:0007669"/>
    <property type="project" value="InterPro"/>
</dbReference>
<dbReference type="GO" id="GO:0045087">
    <property type="term" value="P:innate immune response"/>
    <property type="evidence" value="ECO:0007669"/>
    <property type="project" value="InterPro"/>
</dbReference>
<dbReference type="CDD" id="cd00118">
    <property type="entry name" value="LysM"/>
    <property type="match status" value="1"/>
</dbReference>
<dbReference type="CDD" id="cd14066">
    <property type="entry name" value="STKc_IRAK"/>
    <property type="match status" value="1"/>
</dbReference>
<dbReference type="FunFam" id="1.10.510.10:FF:000468">
    <property type="entry name" value="PTI1-like tyrosine-protein kinase 3"/>
    <property type="match status" value="1"/>
</dbReference>
<dbReference type="Gene3D" id="3.10.350.10">
    <property type="entry name" value="LysM domain"/>
    <property type="match status" value="1"/>
</dbReference>
<dbReference type="Gene3D" id="3.30.200.20">
    <property type="entry name" value="Phosphorylase Kinase, domain 1"/>
    <property type="match status" value="1"/>
</dbReference>
<dbReference type="Gene3D" id="1.10.510.10">
    <property type="entry name" value="Transferase(Phosphotransferase) domain 1"/>
    <property type="match status" value="1"/>
</dbReference>
<dbReference type="InterPro" id="IPR044812">
    <property type="entry name" value="CERK1/LYK3-like"/>
</dbReference>
<dbReference type="InterPro" id="IPR011009">
    <property type="entry name" value="Kinase-like_dom_sf"/>
</dbReference>
<dbReference type="InterPro" id="IPR018392">
    <property type="entry name" value="LysM_dom"/>
</dbReference>
<dbReference type="InterPro" id="IPR036779">
    <property type="entry name" value="LysM_dom_sf"/>
</dbReference>
<dbReference type="InterPro" id="IPR000719">
    <property type="entry name" value="Prot_kinase_dom"/>
</dbReference>
<dbReference type="InterPro" id="IPR017441">
    <property type="entry name" value="Protein_kinase_ATP_BS"/>
</dbReference>
<dbReference type="InterPro" id="IPR001245">
    <property type="entry name" value="Ser-Thr/Tyr_kinase_cat_dom"/>
</dbReference>
<dbReference type="InterPro" id="IPR008271">
    <property type="entry name" value="Ser/Thr_kinase_AS"/>
</dbReference>
<dbReference type="PANTHER" id="PTHR46204:SF2">
    <property type="entry name" value="CHITIN ELICITOR RECEPTOR KINASE 1"/>
    <property type="match status" value="1"/>
</dbReference>
<dbReference type="PANTHER" id="PTHR46204">
    <property type="entry name" value="CHITIN ELICITOR RECEPTOR KINASE 1-RELATED"/>
    <property type="match status" value="1"/>
</dbReference>
<dbReference type="Pfam" id="PF01476">
    <property type="entry name" value="LysM"/>
    <property type="match status" value="1"/>
</dbReference>
<dbReference type="Pfam" id="PF07714">
    <property type="entry name" value="PK_Tyr_Ser-Thr"/>
    <property type="match status" value="1"/>
</dbReference>
<dbReference type="SMART" id="SM00257">
    <property type="entry name" value="LysM"/>
    <property type="match status" value="3"/>
</dbReference>
<dbReference type="SMART" id="SM00220">
    <property type="entry name" value="S_TKc"/>
    <property type="match status" value="1"/>
</dbReference>
<dbReference type="SUPFAM" id="SSF56112">
    <property type="entry name" value="Protein kinase-like (PK-like)"/>
    <property type="match status" value="1"/>
</dbReference>
<dbReference type="PROSITE" id="PS51782">
    <property type="entry name" value="LYSM"/>
    <property type="match status" value="3"/>
</dbReference>
<dbReference type="PROSITE" id="PS00107">
    <property type="entry name" value="PROTEIN_KINASE_ATP"/>
    <property type="match status" value="1"/>
</dbReference>
<dbReference type="PROSITE" id="PS50011">
    <property type="entry name" value="PROTEIN_KINASE_DOM"/>
    <property type="match status" value="1"/>
</dbReference>
<dbReference type="PROSITE" id="PS00108">
    <property type="entry name" value="PROTEIN_KINASE_ST"/>
    <property type="match status" value="1"/>
</dbReference>
<comment type="function">
    <text evidence="1 7">Lysin motif (LysM) receptor kinase required as a cell surface receptor for chitin elicitor (chitooligosaccharides) signaling leading to innate immunity in response to biotic stresses (By similarity). The CERK1, MEKK1a/b, MKK1a/b/c and MPK4a/b proteins are involved in pathogen defense. The pathway induces rapid growth inhibition, cell wall depositions and accumulation of defense-related transcripts. This protein is required for response to chitin. Is able to complement the A.thaliana cerk1 mutant (PubMed:27268428).</text>
</comment>
<comment type="catalytic activity">
    <reaction evidence="2">
        <text>L-seryl-[protein] + ATP = O-phospho-L-seryl-[protein] + ADP + H(+)</text>
        <dbReference type="Rhea" id="RHEA:17989"/>
        <dbReference type="Rhea" id="RHEA-COMP:9863"/>
        <dbReference type="Rhea" id="RHEA-COMP:11604"/>
        <dbReference type="ChEBI" id="CHEBI:15378"/>
        <dbReference type="ChEBI" id="CHEBI:29999"/>
        <dbReference type="ChEBI" id="CHEBI:30616"/>
        <dbReference type="ChEBI" id="CHEBI:83421"/>
        <dbReference type="ChEBI" id="CHEBI:456216"/>
        <dbReference type="EC" id="2.7.11.1"/>
    </reaction>
</comment>
<comment type="catalytic activity">
    <reaction evidence="2">
        <text>L-threonyl-[protein] + ATP = O-phospho-L-threonyl-[protein] + ADP + H(+)</text>
        <dbReference type="Rhea" id="RHEA:46608"/>
        <dbReference type="Rhea" id="RHEA-COMP:11060"/>
        <dbReference type="Rhea" id="RHEA-COMP:11605"/>
        <dbReference type="ChEBI" id="CHEBI:15378"/>
        <dbReference type="ChEBI" id="CHEBI:30013"/>
        <dbReference type="ChEBI" id="CHEBI:30616"/>
        <dbReference type="ChEBI" id="CHEBI:61977"/>
        <dbReference type="ChEBI" id="CHEBI:456216"/>
        <dbReference type="EC" id="2.7.11.1"/>
    </reaction>
</comment>
<comment type="subcellular location">
    <subcellularLocation>
        <location evidence="2">Cell membrane</location>
        <topology evidence="2">Single-pass membrane protein</topology>
    </subcellularLocation>
</comment>
<comment type="induction">
    <text evidence="7">Up-regulated in response to chitosan.</text>
</comment>
<comment type="disruption phenotype">
    <text evidence="7">Chitin treatment does not lead to growth inhibition or reduced cell wall-associated depositions in contrast to the wild-type. No chitin-, chitosan- or chitin hexamer-induced MPK phosphorylation. Peptidyl glycan (PGN) from S.aureus does not induce MPK phosphorylation either. Reduced accumulation of PAL4 and CHS transcripts in response to chitin. Tissues fail to exhibit enhanced conductivity in an electrolyte leakage assay.</text>
</comment>
<comment type="similarity">
    <text evidence="4">Belongs to the protein kinase superfamily. Ser/Thr protein kinase family.</text>
</comment>
<comment type="sequence caution" evidence="9">
    <conflict type="erroneous gene model prediction">
        <sequence resource="EMBL-CDS" id="EDQ51753"/>
    </conflict>
</comment>
<sequence>MKFQMKMKSELCRTYKYWLILLVLWLSGVTQRETGVLIVDADCIPPNGCKALAYYRLKQGDDLEKLQGRFQTNNSEVLAYNPQLVDANSIQAGTNIYLPFDCLCLNGELVHRFSYTVTTNDTAEKVVDVTYQKLTTVGAVRSASNSGDLSSIYSGQSLTIPVRCYCGDPNVDPKYGLFSTYVVQADDQLTSLSTNFSVDADVISKFNSDTRNLSPDSIIFIPSKAANGSFPPFSGYVLGTVHWRSNVGIIVGVVVGGIVLAVLLLFALIFGFKHFRRRKLAKEPTMQQSGLLSSSSMAGSKPSRSGSTMLPVPKSVEFTYEELAAATDNFSLAKKIGQGGFASVYYGVIRDQKLAIKKMTLQCTKEFLAELQVLTNVHHTNLVQLIGYCTTNSLFLVYEYIENGTLDHHLRRRKSDDKPPLSWLQRVQICLDSARGLEYIHEHTKPTYIHRDIKSANILLDDNFRAKVADFGLAKLAEEGTGTGIVGTFGYMPPEYALYGEVSPKLDVYAFGVVLFEIISGRVAISSALPSENDQQSPAQNRESRTLTSFFEPVLNDPDGKTLLPKCIDPALNGEYSLDAVWKMAQLARRCTHQSPDMRPTMRFAVVQLMTLASVTQEWDVGYFSRASSQSQPPSGNDQL</sequence>
<keyword id="KW-0067">ATP-binding</keyword>
<keyword id="KW-1003">Cell membrane</keyword>
<keyword id="KW-0147">Chitin-binding</keyword>
<keyword id="KW-1015">Disulfide bond</keyword>
<keyword id="KW-0418">Kinase</keyword>
<keyword id="KW-0472">Membrane</keyword>
<keyword id="KW-0547">Nucleotide-binding</keyword>
<keyword id="KW-0611">Plant defense</keyword>
<keyword id="KW-1185">Reference proteome</keyword>
<keyword id="KW-0723">Serine/threonine-protein kinase</keyword>
<keyword id="KW-0732">Signal</keyword>
<keyword id="KW-0808">Transferase</keyword>
<keyword id="KW-0812">Transmembrane</keyword>
<keyword id="KW-1133">Transmembrane helix</keyword>
<reference key="1">
    <citation type="journal article" date="2016" name="Plant Cell">
        <title>An innate immunity pathway in the Moss Physcomitrella patens.</title>
        <authorList>
            <person name="Bressendorff S."/>
            <person name="Azevedo R."/>
            <person name="Kenchappa C.S."/>
            <person name="Ponce de Leon I."/>
            <person name="Olsen J.V."/>
            <person name="Rasmussen M.W."/>
            <person name="Erbs G."/>
            <person name="Newman M.A."/>
            <person name="Petersen M."/>
            <person name="Mundy J."/>
        </authorList>
    </citation>
    <scope>NUCLEOTIDE SEQUENCE [GENOMIC DNA]</scope>
    <scope>FUNCTION</scope>
    <scope>INDUCTION</scope>
    <scope>DISRUPTION PHENOTYPE</scope>
    <source>
        <strain evidence="8">cv. Gransden 2004</strain>
    </source>
</reference>
<reference evidence="10" key="2">
    <citation type="journal article" date="2008" name="Science">
        <title>The Physcomitrella genome reveals evolutionary insights into the conquest of land by plants.</title>
        <authorList>
            <person name="Rensing S.A."/>
            <person name="Lang D."/>
            <person name="Zimmer A.D."/>
            <person name="Terry A."/>
            <person name="Salamov A."/>
            <person name="Shapiro H."/>
            <person name="Nishiyama T."/>
            <person name="Perroud P.-F."/>
            <person name="Lindquist E.A."/>
            <person name="Kamisugi Y."/>
            <person name="Tanahashi T."/>
            <person name="Sakakibara K."/>
            <person name="Fujita T."/>
            <person name="Oishi K."/>
            <person name="Shin-I T."/>
            <person name="Kuroki Y."/>
            <person name="Toyoda A."/>
            <person name="Suzuki Y."/>
            <person name="Hashimoto S.-I."/>
            <person name="Yamaguchi K."/>
            <person name="Sugano S."/>
            <person name="Kohara Y."/>
            <person name="Fujiyama A."/>
            <person name="Anterola A."/>
            <person name="Aoki S."/>
            <person name="Ashton N."/>
            <person name="Barbazuk W.B."/>
            <person name="Barker E."/>
            <person name="Bennetzen J.L."/>
            <person name="Blankenship R."/>
            <person name="Cho S.H."/>
            <person name="Dutcher S.K."/>
            <person name="Estelle M."/>
            <person name="Fawcett J.A."/>
            <person name="Gundlach H."/>
            <person name="Hanada K."/>
            <person name="Heyl A."/>
            <person name="Hicks K.A."/>
            <person name="Hughes J."/>
            <person name="Lohr M."/>
            <person name="Mayer K."/>
            <person name="Melkozernov A."/>
            <person name="Murata T."/>
            <person name="Nelson D.R."/>
            <person name="Pils B."/>
            <person name="Prigge M."/>
            <person name="Reiss B."/>
            <person name="Renner T."/>
            <person name="Rombauts S."/>
            <person name="Rushton P.J."/>
            <person name="Sanderfoot A."/>
            <person name="Schween G."/>
            <person name="Shiu S.-H."/>
            <person name="Stueber K."/>
            <person name="Theodoulou F.L."/>
            <person name="Tu H."/>
            <person name="Van de Peer Y."/>
            <person name="Verrier P.J."/>
            <person name="Waters E."/>
            <person name="Wood A."/>
            <person name="Yang L."/>
            <person name="Cove D."/>
            <person name="Cuming A.C."/>
            <person name="Hasebe M."/>
            <person name="Lucas S."/>
            <person name="Mishler B.D."/>
            <person name="Reski R."/>
            <person name="Grigoriev I.V."/>
            <person name="Quatrano R.S."/>
            <person name="Boore J.L."/>
        </authorList>
    </citation>
    <scope>NUCLEOTIDE SEQUENCE [LARGE SCALE GENOMIC DNA] (PARTIAL)</scope>
    <source>
        <strain>cv. Gransden 2004</strain>
    </source>
</reference>
<evidence type="ECO:0000250" key="1">
    <source>
        <dbReference type="UniProtKB" id="A0A0P0XII1"/>
    </source>
</evidence>
<evidence type="ECO:0000250" key="2">
    <source>
        <dbReference type="UniProtKB" id="A8R7E6"/>
    </source>
</evidence>
<evidence type="ECO:0000255" key="3"/>
<evidence type="ECO:0000255" key="4">
    <source>
        <dbReference type="PROSITE-ProRule" id="PRU00159"/>
    </source>
</evidence>
<evidence type="ECO:0000255" key="5">
    <source>
        <dbReference type="PROSITE-ProRule" id="PRU01118"/>
    </source>
</evidence>
<evidence type="ECO:0000256" key="6">
    <source>
        <dbReference type="SAM" id="MobiDB-lite"/>
    </source>
</evidence>
<evidence type="ECO:0000269" key="7">
    <source>
    </source>
</evidence>
<evidence type="ECO:0000303" key="8">
    <source>
    </source>
</evidence>
<evidence type="ECO:0000305" key="9"/>
<evidence type="ECO:0000312" key="10">
    <source>
        <dbReference type="EMBL" id="EDQ51753.1"/>
    </source>
</evidence>
<protein>
    <recommendedName>
        <fullName evidence="9">Chitin elicitor receptor kinase 1</fullName>
        <shortName evidence="8">PpCERK1</shortName>
        <ecNumber evidence="2">2.7.11.1</ecNumber>
    </recommendedName>
    <alternativeName>
        <fullName evidence="8">Chitin receptor CERK1</fullName>
    </alternativeName>
    <alternativeName>
        <fullName evidence="9">LysM domain receptor-like kinase 1</fullName>
    </alternativeName>
    <alternativeName>
        <fullName evidence="9">LysM-containing receptor-like kinase 1</fullName>
    </alternativeName>
</protein>
<accession>A9TXT1</accession>
<organism>
    <name type="scientific">Physcomitrium patens</name>
    <name type="common">Spreading-leaved earth moss</name>
    <name type="synonym">Physcomitrella patens</name>
    <dbReference type="NCBI Taxonomy" id="3218"/>
    <lineage>
        <taxon>Eukaryota</taxon>
        <taxon>Viridiplantae</taxon>
        <taxon>Streptophyta</taxon>
        <taxon>Embryophyta</taxon>
        <taxon>Bryophyta</taxon>
        <taxon>Bryophytina</taxon>
        <taxon>Bryopsida</taxon>
        <taxon>Funariidae</taxon>
        <taxon>Funariales</taxon>
        <taxon>Funariaceae</taxon>
        <taxon>Physcomitrium</taxon>
    </lineage>
</organism>
<feature type="signal peptide" evidence="3">
    <location>
        <begin position="1"/>
        <end position="31"/>
    </location>
</feature>
<feature type="chain" id="PRO_0000443381" description="Chitin elicitor receptor kinase 1">
    <location>
        <begin position="32"/>
        <end position="640"/>
    </location>
</feature>
<feature type="topological domain" description="Extracellular" evidence="9">
    <location>
        <begin position="32"/>
        <end position="248"/>
    </location>
</feature>
<feature type="transmembrane region" description="Helical" evidence="3">
    <location>
        <begin position="249"/>
        <end position="269"/>
    </location>
</feature>
<feature type="topological domain" description="Cytoplasmic" evidence="9">
    <location>
        <begin position="270"/>
        <end position="640"/>
    </location>
</feature>
<feature type="domain" description="LysM 1" evidence="5">
    <location>
        <begin position="53"/>
        <end position="98"/>
    </location>
</feature>
<feature type="domain" description="LysM 2" evidence="5">
    <location>
        <begin position="113"/>
        <end position="160"/>
    </location>
</feature>
<feature type="domain" description="LysM 3" evidence="5">
    <location>
        <begin position="179"/>
        <end position="227"/>
    </location>
</feature>
<feature type="domain" description="Protein kinase" evidence="4">
    <location>
        <begin position="330"/>
        <end position="612"/>
    </location>
</feature>
<feature type="region of interest" description="Disordered" evidence="6">
    <location>
        <begin position="286"/>
        <end position="308"/>
    </location>
</feature>
<feature type="compositionally biased region" description="Low complexity" evidence="6">
    <location>
        <begin position="289"/>
        <end position="307"/>
    </location>
</feature>
<feature type="active site" description="Proton acceptor" evidence="4">
    <location>
        <position position="452"/>
    </location>
</feature>
<feature type="binding site" evidence="2">
    <location>
        <begin position="119"/>
        <end position="125"/>
    </location>
    <ligand>
        <name>chitin</name>
        <dbReference type="ChEBI" id="CHEBI:17029"/>
    </ligand>
</feature>
<feature type="binding site" evidence="2">
    <location>
        <begin position="148"/>
        <end position="154"/>
    </location>
    <ligand>
        <name>chitin</name>
        <dbReference type="ChEBI" id="CHEBI:17029"/>
    </ligand>
</feature>
<feature type="binding site" evidence="4">
    <location>
        <begin position="336"/>
        <end position="344"/>
    </location>
    <ligand>
        <name>ATP</name>
        <dbReference type="ChEBI" id="CHEBI:30616"/>
    </ligand>
</feature>
<feature type="binding site" evidence="4">
    <location>
        <position position="357"/>
    </location>
    <ligand>
        <name>ATP</name>
        <dbReference type="ChEBI" id="CHEBI:30616"/>
    </ligand>
</feature>
<feature type="disulfide bond" evidence="2">
    <location>
        <begin position="43"/>
        <end position="104"/>
    </location>
</feature>
<feature type="disulfide bond" evidence="2">
    <location>
        <begin position="49"/>
        <end position="166"/>
    </location>
</feature>
<feature type="disulfide bond" evidence="2">
    <location>
        <begin position="102"/>
        <end position="164"/>
    </location>
</feature>
<feature type="sequence conflict" description="In Ref. 1; no nucleotide entry." evidence="9" ref="1">
    <original>YVL</original>
    <variation>SSG</variation>
    <location>
        <begin position="236"/>
        <end position="238"/>
    </location>
</feature>
<feature type="sequence conflict" description="In Ref. 1; no nucleotide entry." evidence="9" ref="1">
    <original>TVHW</original>
    <variation>GSS</variation>
    <location>
        <begin position="240"/>
        <end position="243"/>
    </location>
</feature>
<name>CERK1_PHYPA</name>
<gene>
    <name evidence="8" type="primary">CERK1</name>
    <name evidence="10" type="ORF">PHYPADRAFT_1279</name>
</gene>